<proteinExistence type="inferred from homology"/>
<reference key="1">
    <citation type="journal article" date="2006" name="J. Bacteriol.">
        <title>Chromosome rearrangement and diversification of Francisella tularensis revealed by the type B (OSU18) genome sequence.</title>
        <authorList>
            <person name="Petrosino J.F."/>
            <person name="Xiang Q."/>
            <person name="Karpathy S.E."/>
            <person name="Jiang H."/>
            <person name="Yerrapragada S."/>
            <person name="Liu Y."/>
            <person name="Gioia J."/>
            <person name="Hemphill L."/>
            <person name="Gonzalez A."/>
            <person name="Raghavan T.M."/>
            <person name="Uzman A."/>
            <person name="Fox G.E."/>
            <person name="Highlander S."/>
            <person name="Reichard M."/>
            <person name="Morton R.J."/>
            <person name="Clinkenbeard K.D."/>
            <person name="Weinstock G.M."/>
        </authorList>
    </citation>
    <scope>NUCLEOTIDE SEQUENCE [LARGE SCALE GENOMIC DNA]</scope>
    <source>
        <strain>OSU18</strain>
    </source>
</reference>
<sequence length="282" mass="30482">MILIDGKSLSKDLKERLATQVQEYKHHTAITPKLVAIIVGNDPASKTYVASKEKACAQVGIDSQVITLPEHTTESELLELIDQLNNDSSVHAILVQLPLPAHINKNNVIYSIKPEKDVDGFHPTNVGRLQLRDKKCLESCTPKGIMTMLREYGIKTEGAYVVVVGASNVVGKPVSQLLLNAKATVTTCHRFTTDLKSHTTKADILIVAVGKPNFITADMVKEGAVVIDVGINHVDGKIVGDVDFAAVKDKVAAITPVPGGVGPMTITELLYNTFQCAQELNR</sequence>
<dbReference type="EC" id="1.5.1.5" evidence="1"/>
<dbReference type="EC" id="3.5.4.9" evidence="1"/>
<dbReference type="EMBL" id="CP000437">
    <property type="protein sequence ID" value="ABI82383.1"/>
    <property type="molecule type" value="Genomic_DNA"/>
</dbReference>
<dbReference type="RefSeq" id="WP_003014628.1">
    <property type="nucleotide sequence ID" value="NC_017463.1"/>
</dbReference>
<dbReference type="SMR" id="Q0BNF1"/>
<dbReference type="KEGG" id="fth:FTH_0386"/>
<dbReference type="UniPathway" id="UPA00193"/>
<dbReference type="GO" id="GO:0005829">
    <property type="term" value="C:cytosol"/>
    <property type="evidence" value="ECO:0007669"/>
    <property type="project" value="TreeGrafter"/>
</dbReference>
<dbReference type="GO" id="GO:0004477">
    <property type="term" value="F:methenyltetrahydrofolate cyclohydrolase activity"/>
    <property type="evidence" value="ECO:0007669"/>
    <property type="project" value="UniProtKB-UniRule"/>
</dbReference>
<dbReference type="GO" id="GO:0004488">
    <property type="term" value="F:methylenetetrahydrofolate dehydrogenase (NADP+) activity"/>
    <property type="evidence" value="ECO:0007669"/>
    <property type="project" value="UniProtKB-UniRule"/>
</dbReference>
<dbReference type="GO" id="GO:0000105">
    <property type="term" value="P:L-histidine biosynthetic process"/>
    <property type="evidence" value="ECO:0007669"/>
    <property type="project" value="UniProtKB-KW"/>
</dbReference>
<dbReference type="GO" id="GO:0009086">
    <property type="term" value="P:methionine biosynthetic process"/>
    <property type="evidence" value="ECO:0007669"/>
    <property type="project" value="UniProtKB-KW"/>
</dbReference>
<dbReference type="GO" id="GO:0006164">
    <property type="term" value="P:purine nucleotide biosynthetic process"/>
    <property type="evidence" value="ECO:0007669"/>
    <property type="project" value="UniProtKB-KW"/>
</dbReference>
<dbReference type="GO" id="GO:0035999">
    <property type="term" value="P:tetrahydrofolate interconversion"/>
    <property type="evidence" value="ECO:0007669"/>
    <property type="project" value="UniProtKB-UniRule"/>
</dbReference>
<dbReference type="CDD" id="cd01080">
    <property type="entry name" value="NAD_bind_m-THF_DH_Cyclohyd"/>
    <property type="match status" value="1"/>
</dbReference>
<dbReference type="FunFam" id="3.40.50.10860:FF:000001">
    <property type="entry name" value="Bifunctional protein FolD"/>
    <property type="match status" value="1"/>
</dbReference>
<dbReference type="FunFam" id="3.40.50.720:FF:000094">
    <property type="entry name" value="Bifunctional protein FolD"/>
    <property type="match status" value="1"/>
</dbReference>
<dbReference type="Gene3D" id="3.40.50.10860">
    <property type="entry name" value="Leucine Dehydrogenase, chain A, domain 1"/>
    <property type="match status" value="1"/>
</dbReference>
<dbReference type="Gene3D" id="3.40.50.720">
    <property type="entry name" value="NAD(P)-binding Rossmann-like Domain"/>
    <property type="match status" value="1"/>
</dbReference>
<dbReference type="HAMAP" id="MF_01576">
    <property type="entry name" value="THF_DHG_CYH"/>
    <property type="match status" value="1"/>
</dbReference>
<dbReference type="InterPro" id="IPR046346">
    <property type="entry name" value="Aminoacid_DH-like_N_sf"/>
</dbReference>
<dbReference type="InterPro" id="IPR036291">
    <property type="entry name" value="NAD(P)-bd_dom_sf"/>
</dbReference>
<dbReference type="InterPro" id="IPR000672">
    <property type="entry name" value="THF_DH/CycHdrlase"/>
</dbReference>
<dbReference type="InterPro" id="IPR020630">
    <property type="entry name" value="THF_DH/CycHdrlase_cat_dom"/>
</dbReference>
<dbReference type="InterPro" id="IPR020867">
    <property type="entry name" value="THF_DH/CycHdrlase_CS"/>
</dbReference>
<dbReference type="InterPro" id="IPR020631">
    <property type="entry name" value="THF_DH/CycHdrlase_NAD-bd_dom"/>
</dbReference>
<dbReference type="NCBIfam" id="NF008058">
    <property type="entry name" value="PRK10792.1"/>
    <property type="match status" value="1"/>
</dbReference>
<dbReference type="NCBIfam" id="NF010777">
    <property type="entry name" value="PRK14180.1"/>
    <property type="match status" value="1"/>
</dbReference>
<dbReference type="NCBIfam" id="NF010783">
    <property type="entry name" value="PRK14186.1"/>
    <property type="match status" value="1"/>
</dbReference>
<dbReference type="PANTHER" id="PTHR48099:SF5">
    <property type="entry name" value="C-1-TETRAHYDROFOLATE SYNTHASE, CYTOPLASMIC"/>
    <property type="match status" value="1"/>
</dbReference>
<dbReference type="PANTHER" id="PTHR48099">
    <property type="entry name" value="C-1-TETRAHYDROFOLATE SYNTHASE, CYTOPLASMIC-RELATED"/>
    <property type="match status" value="1"/>
</dbReference>
<dbReference type="Pfam" id="PF00763">
    <property type="entry name" value="THF_DHG_CYH"/>
    <property type="match status" value="1"/>
</dbReference>
<dbReference type="Pfam" id="PF02882">
    <property type="entry name" value="THF_DHG_CYH_C"/>
    <property type="match status" value="1"/>
</dbReference>
<dbReference type="PRINTS" id="PR00085">
    <property type="entry name" value="THFDHDRGNASE"/>
</dbReference>
<dbReference type="SUPFAM" id="SSF53223">
    <property type="entry name" value="Aminoacid dehydrogenase-like, N-terminal domain"/>
    <property type="match status" value="1"/>
</dbReference>
<dbReference type="SUPFAM" id="SSF51735">
    <property type="entry name" value="NAD(P)-binding Rossmann-fold domains"/>
    <property type="match status" value="1"/>
</dbReference>
<dbReference type="PROSITE" id="PS00766">
    <property type="entry name" value="THF_DHG_CYH_1"/>
    <property type="match status" value="1"/>
</dbReference>
<dbReference type="PROSITE" id="PS00767">
    <property type="entry name" value="THF_DHG_CYH_2"/>
    <property type="match status" value="1"/>
</dbReference>
<name>FOLD_FRATO</name>
<keyword id="KW-0028">Amino-acid biosynthesis</keyword>
<keyword id="KW-0368">Histidine biosynthesis</keyword>
<keyword id="KW-0378">Hydrolase</keyword>
<keyword id="KW-0486">Methionine biosynthesis</keyword>
<keyword id="KW-0511">Multifunctional enzyme</keyword>
<keyword id="KW-0521">NADP</keyword>
<keyword id="KW-0554">One-carbon metabolism</keyword>
<keyword id="KW-0560">Oxidoreductase</keyword>
<keyword id="KW-0658">Purine biosynthesis</keyword>
<gene>
    <name evidence="1" type="primary">folD</name>
    <name type="ordered locus">FTH_0386</name>
</gene>
<feature type="chain" id="PRO_0000268351" description="Bifunctional protein FolD">
    <location>
        <begin position="1"/>
        <end position="282"/>
    </location>
</feature>
<feature type="binding site" evidence="1">
    <location>
        <begin position="165"/>
        <end position="167"/>
    </location>
    <ligand>
        <name>NADP(+)</name>
        <dbReference type="ChEBI" id="CHEBI:58349"/>
    </ligand>
</feature>
<feature type="binding site" evidence="1">
    <location>
        <position position="231"/>
    </location>
    <ligand>
        <name>NADP(+)</name>
        <dbReference type="ChEBI" id="CHEBI:58349"/>
    </ligand>
</feature>
<evidence type="ECO:0000255" key="1">
    <source>
        <dbReference type="HAMAP-Rule" id="MF_01576"/>
    </source>
</evidence>
<accession>Q0BNF1</accession>
<organism>
    <name type="scientific">Francisella tularensis subsp. holarctica (strain OSU18)</name>
    <dbReference type="NCBI Taxonomy" id="393011"/>
    <lineage>
        <taxon>Bacteria</taxon>
        <taxon>Pseudomonadati</taxon>
        <taxon>Pseudomonadota</taxon>
        <taxon>Gammaproteobacteria</taxon>
        <taxon>Thiotrichales</taxon>
        <taxon>Francisellaceae</taxon>
        <taxon>Francisella</taxon>
    </lineage>
</organism>
<protein>
    <recommendedName>
        <fullName evidence="1">Bifunctional protein FolD</fullName>
    </recommendedName>
    <domain>
        <recommendedName>
            <fullName evidence="1">Methylenetetrahydrofolate dehydrogenase</fullName>
            <ecNumber evidence="1">1.5.1.5</ecNumber>
        </recommendedName>
    </domain>
    <domain>
        <recommendedName>
            <fullName evidence="1">Methenyltetrahydrofolate cyclohydrolase</fullName>
            <ecNumber evidence="1">3.5.4.9</ecNumber>
        </recommendedName>
    </domain>
</protein>
<comment type="function">
    <text evidence="1">Catalyzes the oxidation of 5,10-methylenetetrahydrofolate to 5,10-methenyltetrahydrofolate and then the hydrolysis of 5,10-methenyltetrahydrofolate to 10-formyltetrahydrofolate.</text>
</comment>
<comment type="catalytic activity">
    <reaction evidence="1">
        <text>(6R)-5,10-methylene-5,6,7,8-tetrahydrofolate + NADP(+) = (6R)-5,10-methenyltetrahydrofolate + NADPH</text>
        <dbReference type="Rhea" id="RHEA:22812"/>
        <dbReference type="ChEBI" id="CHEBI:15636"/>
        <dbReference type="ChEBI" id="CHEBI:57455"/>
        <dbReference type="ChEBI" id="CHEBI:57783"/>
        <dbReference type="ChEBI" id="CHEBI:58349"/>
        <dbReference type="EC" id="1.5.1.5"/>
    </reaction>
</comment>
<comment type="catalytic activity">
    <reaction evidence="1">
        <text>(6R)-5,10-methenyltetrahydrofolate + H2O = (6R)-10-formyltetrahydrofolate + H(+)</text>
        <dbReference type="Rhea" id="RHEA:23700"/>
        <dbReference type="ChEBI" id="CHEBI:15377"/>
        <dbReference type="ChEBI" id="CHEBI:15378"/>
        <dbReference type="ChEBI" id="CHEBI:57455"/>
        <dbReference type="ChEBI" id="CHEBI:195366"/>
        <dbReference type="EC" id="3.5.4.9"/>
    </reaction>
</comment>
<comment type="pathway">
    <text evidence="1">One-carbon metabolism; tetrahydrofolate interconversion.</text>
</comment>
<comment type="subunit">
    <text evidence="1">Homodimer.</text>
</comment>
<comment type="similarity">
    <text evidence="1">Belongs to the tetrahydrofolate dehydrogenase/cyclohydrolase family.</text>
</comment>